<proteinExistence type="inferred from homology"/>
<accession>A7Z7Z0</accession>
<sequence>MKLVDLTADLQALLASPNVHHNLSAPKLTEKVISRNEGTLTSTGAVRATTGAYTGRSPKDKFIVREQSTENQIDWGAVNQPISEEAFEKLYAKVVSYLKQRDELFVFEGFAGADEKYRLPITVVNEFAWHNLFARQLFIRPETDERDTQAQPFTILSAPHFKADPETDGTHSETFIIVSFEKRVILIGGTEYAGEMKKSIFSIMNFLLPQQDILPMHCSANVGEKGDVALFFGLSGTGKTTLSADADRKLIGDDEHGWSDSGVFNIEGGCYAKCINLSEEKEPQIFRAIRFGSVLENVVLDEKTGEADYDNSFYTENTRAAYPIEMIGNIVQPSIAGHPQAIVFLTADAFGVLPPISKLTKEQAMYHFLSGYTSKLAGTERGVTSPQTTFSTCFGSPFLPLPAHVYAEMLGHKIDEHGVQVFLVNTGWTGGGYGVGERMKLSYTRAMVKAAIEGRLNQTDMTADSIFGLRSPVHVPGVPDEVLQPENTWSDKQAYNEKALFLANEFKENFKKFSHADSIAKAGGPLV</sequence>
<dbReference type="EC" id="4.1.1.49" evidence="1"/>
<dbReference type="EMBL" id="CP000560">
    <property type="protein sequence ID" value="ABS75116.1"/>
    <property type="molecule type" value="Genomic_DNA"/>
</dbReference>
<dbReference type="RefSeq" id="WP_007408828.1">
    <property type="nucleotide sequence ID" value="NC_009725.2"/>
</dbReference>
<dbReference type="SMR" id="A7Z7Z0"/>
<dbReference type="GeneID" id="93081899"/>
<dbReference type="KEGG" id="bay:RBAM_027580"/>
<dbReference type="HOGENOM" id="CLU_018247_0_1_9"/>
<dbReference type="UniPathway" id="UPA00138"/>
<dbReference type="Proteomes" id="UP000001120">
    <property type="component" value="Chromosome"/>
</dbReference>
<dbReference type="GO" id="GO:0005829">
    <property type="term" value="C:cytosol"/>
    <property type="evidence" value="ECO:0007669"/>
    <property type="project" value="TreeGrafter"/>
</dbReference>
<dbReference type="GO" id="GO:0005524">
    <property type="term" value="F:ATP binding"/>
    <property type="evidence" value="ECO:0007669"/>
    <property type="project" value="UniProtKB-UniRule"/>
</dbReference>
<dbReference type="GO" id="GO:0046872">
    <property type="term" value="F:metal ion binding"/>
    <property type="evidence" value="ECO:0007669"/>
    <property type="project" value="UniProtKB-KW"/>
</dbReference>
<dbReference type="GO" id="GO:0004612">
    <property type="term" value="F:phosphoenolpyruvate carboxykinase (ATP) activity"/>
    <property type="evidence" value="ECO:0007669"/>
    <property type="project" value="UniProtKB-UniRule"/>
</dbReference>
<dbReference type="GO" id="GO:0006094">
    <property type="term" value="P:gluconeogenesis"/>
    <property type="evidence" value="ECO:0007669"/>
    <property type="project" value="UniProtKB-UniRule"/>
</dbReference>
<dbReference type="CDD" id="cd00484">
    <property type="entry name" value="PEPCK_ATP"/>
    <property type="match status" value="1"/>
</dbReference>
<dbReference type="FunFam" id="2.170.8.10:FF:000001">
    <property type="entry name" value="Phosphoenolpyruvate carboxykinase (ATP)"/>
    <property type="match status" value="1"/>
</dbReference>
<dbReference type="FunFam" id="3.40.449.10:FF:000001">
    <property type="entry name" value="Phosphoenolpyruvate carboxykinase (ATP)"/>
    <property type="match status" value="1"/>
</dbReference>
<dbReference type="Gene3D" id="3.90.228.20">
    <property type="match status" value="1"/>
</dbReference>
<dbReference type="Gene3D" id="3.40.449.10">
    <property type="entry name" value="Phosphoenolpyruvate Carboxykinase, domain 1"/>
    <property type="match status" value="1"/>
</dbReference>
<dbReference type="Gene3D" id="2.170.8.10">
    <property type="entry name" value="Phosphoenolpyruvate Carboxykinase, domain 2"/>
    <property type="match status" value="1"/>
</dbReference>
<dbReference type="HAMAP" id="MF_00453">
    <property type="entry name" value="PEPCK_ATP"/>
    <property type="match status" value="1"/>
</dbReference>
<dbReference type="InterPro" id="IPR001272">
    <property type="entry name" value="PEP_carboxykinase_ATP"/>
</dbReference>
<dbReference type="InterPro" id="IPR013035">
    <property type="entry name" value="PEP_carboxykinase_C"/>
</dbReference>
<dbReference type="InterPro" id="IPR008210">
    <property type="entry name" value="PEP_carboxykinase_N"/>
</dbReference>
<dbReference type="InterPro" id="IPR015994">
    <property type="entry name" value="PEPCK_ATP_CS"/>
</dbReference>
<dbReference type="NCBIfam" id="TIGR00224">
    <property type="entry name" value="pckA"/>
    <property type="match status" value="1"/>
</dbReference>
<dbReference type="NCBIfam" id="NF006820">
    <property type="entry name" value="PRK09344.1-2"/>
    <property type="match status" value="1"/>
</dbReference>
<dbReference type="NCBIfam" id="NF006821">
    <property type="entry name" value="PRK09344.1-3"/>
    <property type="match status" value="1"/>
</dbReference>
<dbReference type="PANTHER" id="PTHR30031:SF0">
    <property type="entry name" value="PHOSPHOENOLPYRUVATE CARBOXYKINASE (ATP)"/>
    <property type="match status" value="1"/>
</dbReference>
<dbReference type="PANTHER" id="PTHR30031">
    <property type="entry name" value="PHOSPHOENOLPYRUVATE CARBOXYKINASE ATP"/>
    <property type="match status" value="1"/>
</dbReference>
<dbReference type="Pfam" id="PF01293">
    <property type="entry name" value="PEPCK_ATP"/>
    <property type="match status" value="1"/>
</dbReference>
<dbReference type="PIRSF" id="PIRSF006294">
    <property type="entry name" value="PEP_crbxkin"/>
    <property type="match status" value="1"/>
</dbReference>
<dbReference type="SUPFAM" id="SSF68923">
    <property type="entry name" value="PEP carboxykinase N-terminal domain"/>
    <property type="match status" value="1"/>
</dbReference>
<dbReference type="SUPFAM" id="SSF53795">
    <property type="entry name" value="PEP carboxykinase-like"/>
    <property type="match status" value="1"/>
</dbReference>
<dbReference type="PROSITE" id="PS00532">
    <property type="entry name" value="PEPCK_ATP"/>
    <property type="match status" value="1"/>
</dbReference>
<organism>
    <name type="scientific">Bacillus velezensis (strain DSM 23117 / BGSC 10A6 / LMG 26770 / FZB42)</name>
    <name type="common">Bacillus amyloliquefaciens subsp. plantarum</name>
    <dbReference type="NCBI Taxonomy" id="326423"/>
    <lineage>
        <taxon>Bacteria</taxon>
        <taxon>Bacillati</taxon>
        <taxon>Bacillota</taxon>
        <taxon>Bacilli</taxon>
        <taxon>Bacillales</taxon>
        <taxon>Bacillaceae</taxon>
        <taxon>Bacillus</taxon>
        <taxon>Bacillus amyloliquefaciens group</taxon>
    </lineage>
</organism>
<feature type="chain" id="PRO_1000026314" description="Phosphoenolpyruvate carboxykinase (ATP)">
    <location>
        <begin position="1"/>
        <end position="527"/>
    </location>
</feature>
<feature type="binding site" evidence="1">
    <location>
        <position position="56"/>
    </location>
    <ligand>
        <name>substrate</name>
    </ligand>
</feature>
<feature type="binding site" evidence="1">
    <location>
        <position position="192"/>
    </location>
    <ligand>
        <name>substrate</name>
    </ligand>
</feature>
<feature type="binding site" evidence="1">
    <location>
        <position position="198"/>
    </location>
    <ligand>
        <name>ATP</name>
        <dbReference type="ChEBI" id="CHEBI:30616"/>
    </ligand>
</feature>
<feature type="binding site" evidence="1">
    <location>
        <position position="198"/>
    </location>
    <ligand>
        <name>Mn(2+)</name>
        <dbReference type="ChEBI" id="CHEBI:29035"/>
    </ligand>
</feature>
<feature type="binding site" evidence="1">
    <location>
        <position position="198"/>
    </location>
    <ligand>
        <name>substrate</name>
    </ligand>
</feature>
<feature type="binding site" evidence="1">
    <location>
        <position position="217"/>
    </location>
    <ligand>
        <name>ATP</name>
        <dbReference type="ChEBI" id="CHEBI:30616"/>
    </ligand>
</feature>
<feature type="binding site" evidence="1">
    <location>
        <position position="217"/>
    </location>
    <ligand>
        <name>Mn(2+)</name>
        <dbReference type="ChEBI" id="CHEBI:29035"/>
    </ligand>
</feature>
<feature type="binding site" evidence="1">
    <location>
        <begin position="233"/>
        <end position="241"/>
    </location>
    <ligand>
        <name>ATP</name>
        <dbReference type="ChEBI" id="CHEBI:30616"/>
    </ligand>
</feature>
<feature type="binding site" evidence="1">
    <location>
        <position position="254"/>
    </location>
    <ligand>
        <name>Mn(2+)</name>
        <dbReference type="ChEBI" id="CHEBI:29035"/>
    </ligand>
</feature>
<feature type="binding site" evidence="1">
    <location>
        <position position="282"/>
    </location>
    <ligand>
        <name>ATP</name>
        <dbReference type="ChEBI" id="CHEBI:30616"/>
    </ligand>
</feature>
<feature type="binding site" evidence="1">
    <location>
        <position position="319"/>
    </location>
    <ligand>
        <name>ATP</name>
        <dbReference type="ChEBI" id="CHEBI:30616"/>
    </ligand>
</feature>
<feature type="binding site" evidence="1">
    <location>
        <position position="319"/>
    </location>
    <ligand>
        <name>substrate</name>
    </ligand>
</feature>
<feature type="binding site" evidence="1">
    <location>
        <position position="444"/>
    </location>
    <ligand>
        <name>ATP</name>
        <dbReference type="ChEBI" id="CHEBI:30616"/>
    </ligand>
</feature>
<gene>
    <name evidence="1" type="primary">pckA</name>
    <name type="ordered locus">RBAM_027580</name>
</gene>
<evidence type="ECO:0000255" key="1">
    <source>
        <dbReference type="HAMAP-Rule" id="MF_00453"/>
    </source>
</evidence>
<name>PCKA_BACVZ</name>
<reference key="1">
    <citation type="journal article" date="2007" name="Nat. Biotechnol.">
        <title>Comparative analysis of the complete genome sequence of the plant growth-promoting bacterium Bacillus amyloliquefaciens FZB42.</title>
        <authorList>
            <person name="Chen X.H."/>
            <person name="Koumoutsi A."/>
            <person name="Scholz R."/>
            <person name="Eisenreich A."/>
            <person name="Schneider K."/>
            <person name="Heinemeyer I."/>
            <person name="Morgenstern B."/>
            <person name="Voss B."/>
            <person name="Hess W.R."/>
            <person name="Reva O."/>
            <person name="Junge H."/>
            <person name="Voigt B."/>
            <person name="Jungblut P.R."/>
            <person name="Vater J."/>
            <person name="Suessmuth R."/>
            <person name="Liesegang H."/>
            <person name="Strittmatter A."/>
            <person name="Gottschalk G."/>
            <person name="Borriss R."/>
        </authorList>
    </citation>
    <scope>NUCLEOTIDE SEQUENCE [LARGE SCALE GENOMIC DNA]</scope>
    <source>
        <strain>DSM 23117 / BGSC 10A6 / LMG 26770 / FZB42</strain>
    </source>
</reference>
<keyword id="KW-0067">ATP-binding</keyword>
<keyword id="KW-0963">Cytoplasm</keyword>
<keyword id="KW-0210">Decarboxylase</keyword>
<keyword id="KW-0312">Gluconeogenesis</keyword>
<keyword id="KW-0456">Lyase</keyword>
<keyword id="KW-0464">Manganese</keyword>
<keyword id="KW-0479">Metal-binding</keyword>
<keyword id="KW-0547">Nucleotide-binding</keyword>
<protein>
    <recommendedName>
        <fullName evidence="1">Phosphoenolpyruvate carboxykinase (ATP)</fullName>
        <shortName evidence="1">PCK</shortName>
        <shortName evidence="1">PEP carboxykinase</shortName>
        <shortName evidence="1">PEPCK</shortName>
        <ecNumber evidence="1">4.1.1.49</ecNumber>
    </recommendedName>
</protein>
<comment type="function">
    <text evidence="1">Involved in the gluconeogenesis. Catalyzes the conversion of oxaloacetate (OAA) to phosphoenolpyruvate (PEP) through direct phosphoryl transfer between the nucleoside triphosphate and OAA.</text>
</comment>
<comment type="catalytic activity">
    <reaction evidence="1">
        <text>oxaloacetate + ATP = phosphoenolpyruvate + ADP + CO2</text>
        <dbReference type="Rhea" id="RHEA:18617"/>
        <dbReference type="ChEBI" id="CHEBI:16452"/>
        <dbReference type="ChEBI" id="CHEBI:16526"/>
        <dbReference type="ChEBI" id="CHEBI:30616"/>
        <dbReference type="ChEBI" id="CHEBI:58702"/>
        <dbReference type="ChEBI" id="CHEBI:456216"/>
        <dbReference type="EC" id="4.1.1.49"/>
    </reaction>
</comment>
<comment type="cofactor">
    <cofactor evidence="1">
        <name>Mn(2+)</name>
        <dbReference type="ChEBI" id="CHEBI:29035"/>
    </cofactor>
    <text evidence="1">Binds 1 Mn(2+) ion per subunit.</text>
</comment>
<comment type="pathway">
    <text evidence="1">Carbohydrate biosynthesis; gluconeogenesis.</text>
</comment>
<comment type="subcellular location">
    <subcellularLocation>
        <location evidence="1">Cytoplasm</location>
    </subcellularLocation>
</comment>
<comment type="similarity">
    <text evidence="1">Belongs to the phosphoenolpyruvate carboxykinase (ATP) family.</text>
</comment>